<feature type="chain" id="PRO_0000188746" description="1,4-alpha-glucan branching enzyme GlgB">
    <location>
        <begin position="1"/>
        <end position="764"/>
    </location>
</feature>
<feature type="region of interest" description="Disordered" evidence="2">
    <location>
        <begin position="1"/>
        <end position="46"/>
    </location>
</feature>
<feature type="compositionally biased region" description="Low complexity" evidence="2">
    <location>
        <begin position="17"/>
        <end position="28"/>
    </location>
</feature>
<feature type="active site" description="Nucleophile" evidence="1">
    <location>
        <position position="440"/>
    </location>
</feature>
<feature type="active site" description="Proton donor" evidence="1">
    <location>
        <position position="493"/>
    </location>
</feature>
<name>GLGB_KITAU</name>
<gene>
    <name type="primary">glgB</name>
</gene>
<evidence type="ECO:0000250" key="1"/>
<evidence type="ECO:0000256" key="2">
    <source>
        <dbReference type="SAM" id="MobiDB-lite"/>
    </source>
</evidence>
<evidence type="ECO:0000305" key="3"/>
<accession>P52980</accession>
<protein>
    <recommendedName>
        <fullName>1,4-alpha-glucan branching enzyme GlgB</fullName>
        <ecNumber>2.4.1.18</ecNumber>
    </recommendedName>
    <alternativeName>
        <fullName>1,4-alpha-D-glucan:1,4-alpha-D-glucan 6-glucosyl-transferase</fullName>
    </alternativeName>
    <alternativeName>
        <fullName>Alpha-(1-&gt;4)-glucan branching enzyme</fullName>
    </alternativeName>
    <alternativeName>
        <fullName>Glycogen branching enzyme</fullName>
        <shortName>BE</shortName>
    </alternativeName>
</protein>
<comment type="function">
    <text evidence="1">Catalyzes the formation of the alpha-1,6-glucosidic linkages in glycogen by scission of a 1,4-alpha-linked oligosaccharide from growing alpha-1,4-glucan chains and the subsequent attachment of the oligosaccharide to the alpha-1,6 position.</text>
</comment>
<comment type="catalytic activity">
    <reaction>
        <text>Transfers a segment of a (1-&gt;4)-alpha-D-glucan chain to a primary hydroxy group in a similar glucan chain.</text>
        <dbReference type="EC" id="2.4.1.18"/>
    </reaction>
</comment>
<comment type="pathway">
    <text>Glycan biosynthesis; glycogen biosynthesis.</text>
</comment>
<comment type="subunit">
    <text evidence="1">Monomer.</text>
</comment>
<comment type="similarity">
    <text evidence="3">Belongs to the glycosyl hydrolase 13 family. GlgB subfamily.</text>
</comment>
<sequence length="764" mass="85325">MSAARQPSPTVRDKAAPEPAAPAAPKGARAPRARRAAPPHGVRPAPALAAEERARLLEGRHHDPHAVLGARTQRGGVAFRVLRPYAKAVTVVAKGLRTELVDEGDGLFSGLLPLTGVPDYRLLVTYDSDEIEVHDPYRFLPALGELDLHLIGEGRHEELWTALGSQPMEHQGVAGTRFTVWAPNALGVRVTGDFSYWDAVAYPMRSLGASGVWELFLPGVAEGALYKYEITRPDGGRTLRADPMARYAEVPPANASIVTASRYEWQDAEWMARRGALAPHQAPMSVYELHLASWRPGLSYRQLAEQLPAYVKELGFTHVELMPVAEHPFGGSWGYQVTGFYAPTSRMGTPDDFRFLVDALHRAGIGVIVDWVPAHFPRDDWALAEFDGRPLYEHQDPRRAAHPDWGTLEFDYGRKEVRNFLVANAVYWCQEFHVDGLRADAVASMLYLDYSRDEGDWSPNAHGGREDLDAVALLQEMNATVYRRFPGVVTIAEESTAWDGVTRPTDSGGLGFGLKWNMGWMHDTLRYVSKEPVHRKYHHHDMTFGMVYAFSENFVLPISHDEVVHGKRSLVSKMPGDWWQQRATHRAYLGFMWAHPGKQLLFMGQEFAQGSEWSETYGPDWWVLDSSYPAAGDHLGVRSLVRDLNRTYTASPALWERDSVPEGFAWVEADAADDNVFAFLRFARDGSPLLCVSNFSPVVRHGYRIGVPQEVGQWREVLNTDLEPYGGSGVHHARALRPEPVPAQGRAVSLRMTLPPMATVWLRP</sequence>
<organism>
    <name type="scientific">Kitasatospora aureofaciens</name>
    <name type="common">Streptomyces aureofaciens</name>
    <dbReference type="NCBI Taxonomy" id="1894"/>
    <lineage>
        <taxon>Bacteria</taxon>
        <taxon>Bacillati</taxon>
        <taxon>Actinomycetota</taxon>
        <taxon>Actinomycetes</taxon>
        <taxon>Kitasatosporales</taxon>
        <taxon>Streptomycetaceae</taxon>
        <taxon>Kitasatospora</taxon>
    </lineage>
</organism>
<reference key="1">
    <citation type="journal article" date="1994" name="Biochim. Biophys. Acta">
        <title>Cloning of the putative glycogen branching enzyme gene, glgB, from Streptomyces aureofaciens.</title>
        <authorList>
            <person name="Homerova D."/>
            <person name="Kormanec J."/>
        </authorList>
    </citation>
    <scope>NUCLEOTIDE SEQUENCE [GENOMIC DNA]</scope>
    <source>
        <strain>ATCC 10762 / DSM 40127 / CCM 3239 / JCM 4008 / LMG 5968 / NBRC 12843 / NCIMB 8234 / A-377</strain>
    </source>
</reference>
<proteinExistence type="inferred from homology"/>
<keyword id="KW-0119">Carbohydrate metabolism</keyword>
<keyword id="KW-0320">Glycogen biosynthesis</keyword>
<keyword id="KW-0321">Glycogen metabolism</keyword>
<keyword id="KW-0328">Glycosyltransferase</keyword>
<keyword id="KW-0808">Transferase</keyword>
<dbReference type="EC" id="2.4.1.18"/>
<dbReference type="EMBL" id="L11647">
    <property type="protein sequence ID" value="AAA67437.1"/>
    <property type="molecule type" value="Genomic_DNA"/>
</dbReference>
<dbReference type="PIR" id="S47569">
    <property type="entry name" value="S47569"/>
</dbReference>
<dbReference type="SMR" id="P52980"/>
<dbReference type="STRING" id="1894.ADK78_38000"/>
<dbReference type="CAZy" id="CBM48">
    <property type="family name" value="Carbohydrate-Binding Module Family 48"/>
</dbReference>
<dbReference type="CAZy" id="GH13">
    <property type="family name" value="Glycoside Hydrolase Family 13"/>
</dbReference>
<dbReference type="UniPathway" id="UPA00164"/>
<dbReference type="GO" id="GO:0005829">
    <property type="term" value="C:cytosol"/>
    <property type="evidence" value="ECO:0007669"/>
    <property type="project" value="TreeGrafter"/>
</dbReference>
<dbReference type="GO" id="GO:0003844">
    <property type="term" value="F:1,4-alpha-glucan branching enzyme activity"/>
    <property type="evidence" value="ECO:0007669"/>
    <property type="project" value="UniProtKB-UniRule"/>
</dbReference>
<dbReference type="GO" id="GO:0043169">
    <property type="term" value="F:cation binding"/>
    <property type="evidence" value="ECO:0007669"/>
    <property type="project" value="InterPro"/>
</dbReference>
<dbReference type="GO" id="GO:0004553">
    <property type="term" value="F:hydrolase activity, hydrolyzing O-glycosyl compounds"/>
    <property type="evidence" value="ECO:0007669"/>
    <property type="project" value="InterPro"/>
</dbReference>
<dbReference type="GO" id="GO:0005978">
    <property type="term" value="P:glycogen biosynthetic process"/>
    <property type="evidence" value="ECO:0007669"/>
    <property type="project" value="UniProtKB-UniRule"/>
</dbReference>
<dbReference type="CDD" id="cd11322">
    <property type="entry name" value="AmyAc_Glg_BE"/>
    <property type="match status" value="1"/>
</dbReference>
<dbReference type="CDD" id="cd02855">
    <property type="entry name" value="E_set_GBE_prok_N"/>
    <property type="match status" value="1"/>
</dbReference>
<dbReference type="FunFam" id="2.60.40.10:FF:000169">
    <property type="entry name" value="1,4-alpha-glucan branching enzyme GlgB"/>
    <property type="match status" value="1"/>
</dbReference>
<dbReference type="FunFam" id="2.60.40.1180:FF:000002">
    <property type="entry name" value="1,4-alpha-glucan branching enzyme GlgB"/>
    <property type="match status" value="1"/>
</dbReference>
<dbReference type="FunFam" id="3.20.20.80:FF:000003">
    <property type="entry name" value="1,4-alpha-glucan branching enzyme GlgB"/>
    <property type="match status" value="1"/>
</dbReference>
<dbReference type="Gene3D" id="3.20.20.80">
    <property type="entry name" value="Glycosidases"/>
    <property type="match status" value="1"/>
</dbReference>
<dbReference type="Gene3D" id="2.60.40.1180">
    <property type="entry name" value="Golgi alpha-mannosidase II"/>
    <property type="match status" value="1"/>
</dbReference>
<dbReference type="Gene3D" id="2.60.40.10">
    <property type="entry name" value="Immunoglobulins"/>
    <property type="match status" value="2"/>
</dbReference>
<dbReference type="HAMAP" id="MF_00685">
    <property type="entry name" value="GlgB"/>
    <property type="match status" value="1"/>
</dbReference>
<dbReference type="InterPro" id="IPR006048">
    <property type="entry name" value="A-amylase/branching_C"/>
</dbReference>
<dbReference type="InterPro" id="IPR037439">
    <property type="entry name" value="Branching_enzy"/>
</dbReference>
<dbReference type="InterPro" id="IPR006407">
    <property type="entry name" value="GlgB"/>
</dbReference>
<dbReference type="InterPro" id="IPR054169">
    <property type="entry name" value="GlgB_N"/>
</dbReference>
<dbReference type="InterPro" id="IPR044143">
    <property type="entry name" value="GlgB_N_E_set_prok"/>
</dbReference>
<dbReference type="InterPro" id="IPR006047">
    <property type="entry name" value="Glyco_hydro_13_cat_dom"/>
</dbReference>
<dbReference type="InterPro" id="IPR004193">
    <property type="entry name" value="Glyco_hydro_13_N"/>
</dbReference>
<dbReference type="InterPro" id="IPR013780">
    <property type="entry name" value="Glyco_hydro_b"/>
</dbReference>
<dbReference type="InterPro" id="IPR017853">
    <property type="entry name" value="Glycoside_hydrolase_SF"/>
</dbReference>
<dbReference type="InterPro" id="IPR013783">
    <property type="entry name" value="Ig-like_fold"/>
</dbReference>
<dbReference type="InterPro" id="IPR014756">
    <property type="entry name" value="Ig_E-set"/>
</dbReference>
<dbReference type="NCBIfam" id="TIGR01515">
    <property type="entry name" value="branching_enzym"/>
    <property type="match status" value="1"/>
</dbReference>
<dbReference type="NCBIfam" id="NF003811">
    <property type="entry name" value="PRK05402.1"/>
    <property type="match status" value="1"/>
</dbReference>
<dbReference type="NCBIfam" id="NF008967">
    <property type="entry name" value="PRK12313.1"/>
    <property type="match status" value="1"/>
</dbReference>
<dbReference type="PANTHER" id="PTHR43651">
    <property type="entry name" value="1,4-ALPHA-GLUCAN-BRANCHING ENZYME"/>
    <property type="match status" value="1"/>
</dbReference>
<dbReference type="PANTHER" id="PTHR43651:SF3">
    <property type="entry name" value="1,4-ALPHA-GLUCAN-BRANCHING ENZYME"/>
    <property type="match status" value="1"/>
</dbReference>
<dbReference type="Pfam" id="PF00128">
    <property type="entry name" value="Alpha-amylase"/>
    <property type="match status" value="1"/>
</dbReference>
<dbReference type="Pfam" id="PF02806">
    <property type="entry name" value="Alpha-amylase_C"/>
    <property type="match status" value="1"/>
</dbReference>
<dbReference type="Pfam" id="PF02922">
    <property type="entry name" value="CBM_48"/>
    <property type="match status" value="1"/>
</dbReference>
<dbReference type="Pfam" id="PF22019">
    <property type="entry name" value="GlgB_N"/>
    <property type="match status" value="1"/>
</dbReference>
<dbReference type="PIRSF" id="PIRSF000463">
    <property type="entry name" value="GlgB"/>
    <property type="match status" value="1"/>
</dbReference>
<dbReference type="SMART" id="SM00642">
    <property type="entry name" value="Aamy"/>
    <property type="match status" value="1"/>
</dbReference>
<dbReference type="SUPFAM" id="SSF51445">
    <property type="entry name" value="(Trans)glycosidases"/>
    <property type="match status" value="1"/>
</dbReference>
<dbReference type="SUPFAM" id="SSF81296">
    <property type="entry name" value="E set domains"/>
    <property type="match status" value="1"/>
</dbReference>
<dbReference type="SUPFAM" id="SSF51011">
    <property type="entry name" value="Glycosyl hydrolase domain"/>
    <property type="match status" value="1"/>
</dbReference>